<organism>
    <name type="scientific">Flavobacterium psychrophilum (strain ATCC 49511 / DSM 21280 / CIP 103535 / JIP02/86)</name>
    <dbReference type="NCBI Taxonomy" id="402612"/>
    <lineage>
        <taxon>Bacteria</taxon>
        <taxon>Pseudomonadati</taxon>
        <taxon>Bacteroidota</taxon>
        <taxon>Flavobacteriia</taxon>
        <taxon>Flavobacteriales</taxon>
        <taxon>Flavobacteriaceae</taxon>
        <taxon>Flavobacterium</taxon>
    </lineage>
</organism>
<accession>A6GWA9</accession>
<dbReference type="EC" id="2.5.1.6" evidence="1"/>
<dbReference type="EMBL" id="AM398681">
    <property type="protein sequence ID" value="CAL42382.1"/>
    <property type="molecule type" value="Genomic_DNA"/>
</dbReference>
<dbReference type="RefSeq" id="WP_011962442.1">
    <property type="nucleotide sequence ID" value="NC_009613.3"/>
</dbReference>
<dbReference type="RefSeq" id="YP_001295202.1">
    <property type="nucleotide sequence ID" value="NC_009613.3"/>
</dbReference>
<dbReference type="SMR" id="A6GWA9"/>
<dbReference type="STRING" id="402612.FP0268"/>
<dbReference type="EnsemblBacteria" id="CAL42382">
    <property type="protein sequence ID" value="CAL42382"/>
    <property type="gene ID" value="FP0268"/>
</dbReference>
<dbReference type="GeneID" id="66553899"/>
<dbReference type="KEGG" id="fps:FP0268"/>
<dbReference type="PATRIC" id="fig|402612.5.peg.280"/>
<dbReference type="eggNOG" id="COG0192">
    <property type="taxonomic scope" value="Bacteria"/>
</dbReference>
<dbReference type="HOGENOM" id="CLU_041802_1_1_10"/>
<dbReference type="OrthoDB" id="9801686at2"/>
<dbReference type="UniPathway" id="UPA00315">
    <property type="reaction ID" value="UER00080"/>
</dbReference>
<dbReference type="Proteomes" id="UP000006394">
    <property type="component" value="Chromosome"/>
</dbReference>
<dbReference type="GO" id="GO:0005737">
    <property type="term" value="C:cytoplasm"/>
    <property type="evidence" value="ECO:0007669"/>
    <property type="project" value="UniProtKB-SubCell"/>
</dbReference>
<dbReference type="GO" id="GO:0005524">
    <property type="term" value="F:ATP binding"/>
    <property type="evidence" value="ECO:0007669"/>
    <property type="project" value="UniProtKB-UniRule"/>
</dbReference>
<dbReference type="GO" id="GO:0000287">
    <property type="term" value="F:magnesium ion binding"/>
    <property type="evidence" value="ECO:0007669"/>
    <property type="project" value="UniProtKB-UniRule"/>
</dbReference>
<dbReference type="GO" id="GO:0004478">
    <property type="term" value="F:methionine adenosyltransferase activity"/>
    <property type="evidence" value="ECO:0007669"/>
    <property type="project" value="UniProtKB-UniRule"/>
</dbReference>
<dbReference type="GO" id="GO:0006730">
    <property type="term" value="P:one-carbon metabolic process"/>
    <property type="evidence" value="ECO:0007669"/>
    <property type="project" value="UniProtKB-KW"/>
</dbReference>
<dbReference type="GO" id="GO:0006556">
    <property type="term" value="P:S-adenosylmethionine biosynthetic process"/>
    <property type="evidence" value="ECO:0007669"/>
    <property type="project" value="UniProtKB-UniRule"/>
</dbReference>
<dbReference type="CDD" id="cd18079">
    <property type="entry name" value="S-AdoMet_synt"/>
    <property type="match status" value="1"/>
</dbReference>
<dbReference type="FunFam" id="3.30.300.10:FF:000003">
    <property type="entry name" value="S-adenosylmethionine synthase"/>
    <property type="match status" value="1"/>
</dbReference>
<dbReference type="Gene3D" id="3.30.300.10">
    <property type="match status" value="3"/>
</dbReference>
<dbReference type="HAMAP" id="MF_00086">
    <property type="entry name" value="S_AdoMet_synth1"/>
    <property type="match status" value="1"/>
</dbReference>
<dbReference type="InterPro" id="IPR022631">
    <property type="entry name" value="ADOMET_SYNTHASE_CS"/>
</dbReference>
<dbReference type="InterPro" id="IPR022630">
    <property type="entry name" value="S-AdoMet_synt_C"/>
</dbReference>
<dbReference type="InterPro" id="IPR022629">
    <property type="entry name" value="S-AdoMet_synt_central"/>
</dbReference>
<dbReference type="InterPro" id="IPR022628">
    <property type="entry name" value="S-AdoMet_synt_N"/>
</dbReference>
<dbReference type="InterPro" id="IPR002133">
    <property type="entry name" value="S-AdoMet_synthetase"/>
</dbReference>
<dbReference type="InterPro" id="IPR022636">
    <property type="entry name" value="S-AdoMet_synthetase_sfam"/>
</dbReference>
<dbReference type="NCBIfam" id="TIGR01034">
    <property type="entry name" value="metK"/>
    <property type="match status" value="1"/>
</dbReference>
<dbReference type="PANTHER" id="PTHR11964">
    <property type="entry name" value="S-ADENOSYLMETHIONINE SYNTHETASE"/>
    <property type="match status" value="1"/>
</dbReference>
<dbReference type="Pfam" id="PF02773">
    <property type="entry name" value="S-AdoMet_synt_C"/>
    <property type="match status" value="1"/>
</dbReference>
<dbReference type="Pfam" id="PF02772">
    <property type="entry name" value="S-AdoMet_synt_M"/>
    <property type="match status" value="1"/>
</dbReference>
<dbReference type="Pfam" id="PF00438">
    <property type="entry name" value="S-AdoMet_synt_N"/>
    <property type="match status" value="1"/>
</dbReference>
<dbReference type="PIRSF" id="PIRSF000497">
    <property type="entry name" value="MAT"/>
    <property type="match status" value="1"/>
</dbReference>
<dbReference type="SUPFAM" id="SSF55973">
    <property type="entry name" value="S-adenosylmethionine synthetase"/>
    <property type="match status" value="3"/>
</dbReference>
<dbReference type="PROSITE" id="PS00376">
    <property type="entry name" value="ADOMET_SYNTHASE_1"/>
    <property type="match status" value="1"/>
</dbReference>
<dbReference type="PROSITE" id="PS00377">
    <property type="entry name" value="ADOMET_SYNTHASE_2"/>
    <property type="match status" value="1"/>
</dbReference>
<proteinExistence type="inferred from homology"/>
<name>METK_FLAPJ</name>
<protein>
    <recommendedName>
        <fullName evidence="1">S-adenosylmethionine synthase</fullName>
        <shortName evidence="1">AdoMet synthase</shortName>
        <ecNumber evidence="1">2.5.1.6</ecNumber>
    </recommendedName>
    <alternativeName>
        <fullName evidence="1">MAT</fullName>
    </alternativeName>
    <alternativeName>
        <fullName evidence="1">Methionine adenosyltransferase</fullName>
    </alternativeName>
</protein>
<reference key="1">
    <citation type="journal article" date="2007" name="Nat. Biotechnol.">
        <title>Complete genome sequence of the fish pathogen Flavobacterium psychrophilum.</title>
        <authorList>
            <person name="Duchaud E."/>
            <person name="Boussaha M."/>
            <person name="Loux V."/>
            <person name="Bernardet J.-F."/>
            <person name="Michel C."/>
            <person name="Kerouault B."/>
            <person name="Mondot S."/>
            <person name="Nicolas P."/>
            <person name="Bossy R."/>
            <person name="Caron C."/>
            <person name="Bessieres P."/>
            <person name="Gibrat J.-F."/>
            <person name="Claverol S."/>
            <person name="Dumetz F."/>
            <person name="Le Henaff M."/>
            <person name="Benmansour A."/>
        </authorList>
    </citation>
    <scope>NUCLEOTIDE SEQUENCE [LARGE SCALE GENOMIC DNA]</scope>
    <source>
        <strain>ATCC 49511 / DSM 21280 / CIP 103535 / JIP02/86</strain>
    </source>
</reference>
<sequence>MAYLFTSESVSEGHPDKVADQISDALIDNFLAFDAQSKVACETLVTTGQVILAGEVKSNTYLDVQNIAREVIRKIGYTKSEYMFEANSCGILSAIHEQSADINQGVDRASKEEQGAGDQGMMFGYATNETENYMPLALDLSHALLIELANLRRENNDIKYLRPDAKSQVTLEYSDDNKPQRIDAIVISTQHDDFDEEATMLAKIKTDLVSILIPRIKAKYPQYAHLFNDQITYHINPTGKFVIGGPHGDTGLTGRKIIVDTYGGKGAHGGGAFSGKDPSKVDRSAAYATRHIAKNLVAAGICDEILVQVSYAIGVAKPTSINVVTYGTSKVNLTDGEISKKVEAIFDMRPYFIEQRLKLRNPIYSETAAYGHMGRTPETVTKTFSAPGGLTKTVEVELFTWEKLDFVDTVKTAFGI</sequence>
<keyword id="KW-0067">ATP-binding</keyword>
<keyword id="KW-0963">Cytoplasm</keyword>
<keyword id="KW-0460">Magnesium</keyword>
<keyword id="KW-0479">Metal-binding</keyword>
<keyword id="KW-0547">Nucleotide-binding</keyword>
<keyword id="KW-0554">One-carbon metabolism</keyword>
<keyword id="KW-0630">Potassium</keyword>
<keyword id="KW-1185">Reference proteome</keyword>
<keyword id="KW-0808">Transferase</keyword>
<gene>
    <name evidence="1" type="primary">metK</name>
    <name type="ordered locus">FP0268</name>
</gene>
<comment type="function">
    <text evidence="1">Catalyzes the formation of S-adenosylmethionine (AdoMet) from methionine and ATP. The overall synthetic reaction is composed of two sequential steps, AdoMet formation and the subsequent tripolyphosphate hydrolysis which occurs prior to release of AdoMet from the enzyme.</text>
</comment>
<comment type="catalytic activity">
    <reaction evidence="1">
        <text>L-methionine + ATP + H2O = S-adenosyl-L-methionine + phosphate + diphosphate</text>
        <dbReference type="Rhea" id="RHEA:21080"/>
        <dbReference type="ChEBI" id="CHEBI:15377"/>
        <dbReference type="ChEBI" id="CHEBI:30616"/>
        <dbReference type="ChEBI" id="CHEBI:33019"/>
        <dbReference type="ChEBI" id="CHEBI:43474"/>
        <dbReference type="ChEBI" id="CHEBI:57844"/>
        <dbReference type="ChEBI" id="CHEBI:59789"/>
        <dbReference type="EC" id="2.5.1.6"/>
    </reaction>
</comment>
<comment type="cofactor">
    <cofactor evidence="1">
        <name>Mg(2+)</name>
        <dbReference type="ChEBI" id="CHEBI:18420"/>
    </cofactor>
    <text evidence="1">Binds 2 divalent ions per subunit.</text>
</comment>
<comment type="cofactor">
    <cofactor evidence="1">
        <name>K(+)</name>
        <dbReference type="ChEBI" id="CHEBI:29103"/>
    </cofactor>
    <text evidence="1">Binds 1 potassium ion per subunit.</text>
</comment>
<comment type="pathway">
    <text evidence="1">Amino-acid biosynthesis; S-adenosyl-L-methionine biosynthesis; S-adenosyl-L-methionine from L-methionine: step 1/1.</text>
</comment>
<comment type="subunit">
    <text evidence="1">Homotetramer; dimer of dimers.</text>
</comment>
<comment type="subcellular location">
    <subcellularLocation>
        <location evidence="1">Cytoplasm</location>
    </subcellularLocation>
</comment>
<comment type="similarity">
    <text evidence="1">Belongs to the AdoMet synthase family.</text>
</comment>
<feature type="chain" id="PRO_0000302913" description="S-adenosylmethionine synthase">
    <location>
        <begin position="1"/>
        <end position="416"/>
    </location>
</feature>
<feature type="region of interest" description="Flexible loop" evidence="1">
    <location>
        <begin position="98"/>
        <end position="108"/>
    </location>
</feature>
<feature type="binding site" description="in other chain" evidence="1">
    <location>
        <position position="14"/>
    </location>
    <ligand>
        <name>ATP</name>
        <dbReference type="ChEBI" id="CHEBI:30616"/>
        <note>ligand shared between two neighboring subunits</note>
    </ligand>
</feature>
<feature type="binding site" evidence="1">
    <location>
        <position position="16"/>
    </location>
    <ligand>
        <name>Mg(2+)</name>
        <dbReference type="ChEBI" id="CHEBI:18420"/>
    </ligand>
</feature>
<feature type="binding site" evidence="1">
    <location>
        <position position="42"/>
    </location>
    <ligand>
        <name>K(+)</name>
        <dbReference type="ChEBI" id="CHEBI:29103"/>
    </ligand>
</feature>
<feature type="binding site" description="in other chain" evidence="1">
    <location>
        <position position="55"/>
    </location>
    <ligand>
        <name>L-methionine</name>
        <dbReference type="ChEBI" id="CHEBI:57844"/>
        <note>ligand shared between two neighboring subunits</note>
    </ligand>
</feature>
<feature type="binding site" description="in other chain" evidence="1">
    <location>
        <position position="98"/>
    </location>
    <ligand>
        <name>L-methionine</name>
        <dbReference type="ChEBI" id="CHEBI:57844"/>
        <note>ligand shared between two neighboring subunits</note>
    </ligand>
</feature>
<feature type="binding site" description="in other chain" evidence="1">
    <location>
        <begin position="164"/>
        <end position="166"/>
    </location>
    <ligand>
        <name>ATP</name>
        <dbReference type="ChEBI" id="CHEBI:30616"/>
        <note>ligand shared between two neighboring subunits</note>
    </ligand>
</feature>
<feature type="binding site" description="in other chain" evidence="1">
    <location>
        <begin position="240"/>
        <end position="241"/>
    </location>
    <ligand>
        <name>ATP</name>
        <dbReference type="ChEBI" id="CHEBI:30616"/>
        <note>ligand shared between two neighboring subunits</note>
    </ligand>
</feature>
<feature type="binding site" evidence="1">
    <location>
        <position position="249"/>
    </location>
    <ligand>
        <name>ATP</name>
        <dbReference type="ChEBI" id="CHEBI:30616"/>
        <note>ligand shared between two neighboring subunits</note>
    </ligand>
</feature>
<feature type="binding site" evidence="1">
    <location>
        <position position="249"/>
    </location>
    <ligand>
        <name>L-methionine</name>
        <dbReference type="ChEBI" id="CHEBI:57844"/>
        <note>ligand shared between two neighboring subunits</note>
    </ligand>
</feature>
<feature type="binding site" description="in other chain" evidence="1">
    <location>
        <begin position="255"/>
        <end position="256"/>
    </location>
    <ligand>
        <name>ATP</name>
        <dbReference type="ChEBI" id="CHEBI:30616"/>
        <note>ligand shared between two neighboring subunits</note>
    </ligand>
</feature>
<feature type="binding site" evidence="1">
    <location>
        <position position="272"/>
    </location>
    <ligand>
        <name>ATP</name>
        <dbReference type="ChEBI" id="CHEBI:30616"/>
        <note>ligand shared between two neighboring subunits</note>
    </ligand>
</feature>
<feature type="binding site" evidence="1">
    <location>
        <position position="276"/>
    </location>
    <ligand>
        <name>ATP</name>
        <dbReference type="ChEBI" id="CHEBI:30616"/>
        <note>ligand shared between two neighboring subunits</note>
    </ligand>
</feature>
<feature type="binding site" description="in other chain" evidence="1">
    <location>
        <position position="280"/>
    </location>
    <ligand>
        <name>L-methionine</name>
        <dbReference type="ChEBI" id="CHEBI:57844"/>
        <note>ligand shared between two neighboring subunits</note>
    </ligand>
</feature>
<evidence type="ECO:0000255" key="1">
    <source>
        <dbReference type="HAMAP-Rule" id="MF_00086"/>
    </source>
</evidence>